<protein>
    <recommendedName>
        <fullName evidence="1">Photosystem II reaction center protein H</fullName>
        <shortName evidence="1">PSII-H</shortName>
    </recommendedName>
    <alternativeName>
        <fullName evidence="1">Photosystem II 10 kDa phosphoprotein</fullName>
    </alternativeName>
</protein>
<organism>
    <name type="scientific">Zea mays</name>
    <name type="common">Maize</name>
    <dbReference type="NCBI Taxonomy" id="4577"/>
    <lineage>
        <taxon>Eukaryota</taxon>
        <taxon>Viridiplantae</taxon>
        <taxon>Streptophyta</taxon>
        <taxon>Embryophyta</taxon>
        <taxon>Tracheophyta</taxon>
        <taxon>Spermatophyta</taxon>
        <taxon>Magnoliopsida</taxon>
        <taxon>Liliopsida</taxon>
        <taxon>Poales</taxon>
        <taxon>Poaceae</taxon>
        <taxon>PACMAD clade</taxon>
        <taxon>Panicoideae</taxon>
        <taxon>Andropogonodae</taxon>
        <taxon>Andropogoneae</taxon>
        <taxon>Tripsacinae</taxon>
        <taxon>Zea</taxon>
    </lineage>
</organism>
<sequence length="73" mass="7787">MATQTVEDSSRPKPKRTGAGSLLKPLNSEYGKVAPGWGTTPFMGVAMALFAIFLSIILEIYNSSVLLDGILTN</sequence>
<name>PSBH_MAIZE</name>
<reference key="1">
    <citation type="journal article" date="1987" name="Curr. Genet.">
        <title>The maize plastid psbB-psbF-petB-petD gene cluster: spliced and unspliced petB and petD RNAs encode alternative products.</title>
        <authorList>
            <person name="Rock C.D."/>
            <person name="Barkan A."/>
            <person name="Taylor W.C."/>
        </authorList>
    </citation>
    <scope>NUCLEOTIDE SEQUENCE [LARGE SCALE GENOMIC DNA]</scope>
    <source>
        <strain>cv. B73</strain>
    </source>
</reference>
<reference key="2">
    <citation type="journal article" date="1995" name="J. Mol. Biol.">
        <title>Complete sequence of the maize chloroplast genome: gene content, hotspots of divergence and fine tuning of genetic information by transcript editing.</title>
        <authorList>
            <person name="Maier R.M."/>
            <person name="Neckermann K."/>
            <person name="Igloi G.L."/>
            <person name="Koessel H."/>
        </authorList>
    </citation>
    <scope>NUCLEOTIDE SEQUENCE [LARGE SCALE GENOMIC DNA]</scope>
    <source>
        <strain>cv. B73</strain>
    </source>
</reference>
<reference key="3">
    <citation type="journal article" date="2012" name="Proteomics">
        <title>Differential phosphorylation of thylakoid proteins in mesophyll and bundle sheath chloroplasts from maize plants grown under low or high light.</title>
        <authorList>
            <person name="Fristedt R."/>
            <person name="Wasilewska W."/>
            <person name="Romanowska E."/>
            <person name="Vener A.V."/>
        </authorList>
    </citation>
    <scope>PROTEIN SEQUENCE OF 2-15</scope>
    <scope>SUBUNIT</scope>
    <scope>SUBCELLULAR LOCATION</scope>
    <scope>PHOSPHORYLATION AT THR-3 AND THR-5</scope>
    <source>
        <strain>cv. Olenka</strain>
        <tissue>Bundle sheath cell</tissue>
        <tissue>Mesophyll cell</tissue>
    </source>
</reference>
<accession>P24993</accession>
<evidence type="ECO:0000255" key="1">
    <source>
        <dbReference type="HAMAP-Rule" id="MF_00752"/>
    </source>
</evidence>
<evidence type="ECO:0000256" key="2">
    <source>
        <dbReference type="SAM" id="MobiDB-lite"/>
    </source>
</evidence>
<evidence type="ECO:0000269" key="3">
    <source>
    </source>
</evidence>
<evidence type="ECO:0000305" key="4">
    <source>
    </source>
</evidence>
<keyword id="KW-0150">Chloroplast</keyword>
<keyword id="KW-0903">Direct protein sequencing</keyword>
<keyword id="KW-0472">Membrane</keyword>
<keyword id="KW-0597">Phosphoprotein</keyword>
<keyword id="KW-0602">Photosynthesis</keyword>
<keyword id="KW-0604">Photosystem II</keyword>
<keyword id="KW-0934">Plastid</keyword>
<keyword id="KW-1185">Reference proteome</keyword>
<keyword id="KW-0793">Thylakoid</keyword>
<keyword id="KW-0812">Transmembrane</keyword>
<keyword id="KW-1133">Transmembrane helix</keyword>
<comment type="function">
    <text evidence="1">One of the components of the core complex of photosystem II (PSII), required for its stability and/or assembly. PSII is a light-driven water:plastoquinone oxidoreductase that uses light energy to abstract electrons from H(2)O, generating O(2) and a proton gradient subsequently used for ATP formation. It consists of a core antenna complex that captures photons, and an electron transfer chain that converts photonic excitation into a charge separation.</text>
</comment>
<comment type="subunit">
    <text evidence="1 3">PSII is composed of 1 copy each of membrane proteins PsbA, PsbB, PsbC, PsbD, PsbE, PsbF, PsbH, PsbI, PsbJ, PsbK, PsbL, PsbM, PsbT, PsbX, PsbY, PsbZ, Psb30/Ycf12, at least 3 peripheral proteins of the oxygen-evolving complex and a large number of cofactors. It forms dimeric complexes.</text>
</comment>
<comment type="subcellular location">
    <subcellularLocation>
        <location evidence="1 3">Plastid</location>
        <location evidence="1 3">Chloroplast thylakoid membrane</location>
        <topology evidence="1 4">Single-pass membrane protein</topology>
    </subcellularLocation>
    <text evidence="3">PSII is more abundant in mesophyll cells than bundle sheath cells.</text>
</comment>
<comment type="PTM">
    <text evidence="3">Phosphorylated in both bundle sheath and mesophyll cells, phosphorylation increases when cells are grown under high rather than low light regimes (70 vs 900 umol photons/m-2/s). Double phosphorylation in bundle sheath cells is only seen when cells are grown under high light regimes.</text>
</comment>
<comment type="PTM">
    <text evidence="1">Phosphorylation is a light-dependent reaction catalyzed by a membrane-bound kinase; phosphorylation occurs on Thr residue(s) in the N-terminus of the protein.</text>
</comment>
<comment type="similarity">
    <text evidence="1">Belongs to the PsbH family.</text>
</comment>
<dbReference type="EMBL" id="X05422">
    <property type="protein sequence ID" value="CAA28998.1"/>
    <property type="molecule type" value="Genomic_DNA"/>
</dbReference>
<dbReference type="EMBL" id="X86563">
    <property type="protein sequence ID" value="CAA60314.1"/>
    <property type="molecule type" value="Genomic_DNA"/>
</dbReference>
<dbReference type="PIR" id="S08591">
    <property type="entry name" value="F2ZMBH"/>
</dbReference>
<dbReference type="RefSeq" id="NP_043052.1">
    <property type="nucleotide sequence ID" value="NC_001666.2"/>
</dbReference>
<dbReference type="SMR" id="P24993"/>
<dbReference type="FunCoup" id="P24993">
    <property type="interactions" value="650"/>
</dbReference>
<dbReference type="STRING" id="4577.P24993"/>
<dbReference type="iPTMnet" id="P24993"/>
<dbReference type="PaxDb" id="4577-GRMZM5G831399_P01"/>
<dbReference type="GeneID" id="845205"/>
<dbReference type="KEGG" id="zma:845205"/>
<dbReference type="MaizeGDB" id="69555"/>
<dbReference type="eggNOG" id="ENOG502S8Y7">
    <property type="taxonomic scope" value="Eukaryota"/>
</dbReference>
<dbReference type="HOGENOM" id="CLU_190203_1_0_1"/>
<dbReference type="InParanoid" id="P24993"/>
<dbReference type="OMA" id="RTWLGDI"/>
<dbReference type="OrthoDB" id="564838at2759"/>
<dbReference type="Proteomes" id="UP000007305">
    <property type="component" value="Chloroplast"/>
</dbReference>
<dbReference type="GO" id="GO:0009535">
    <property type="term" value="C:chloroplast thylakoid membrane"/>
    <property type="evidence" value="ECO:0007669"/>
    <property type="project" value="UniProtKB-SubCell"/>
</dbReference>
<dbReference type="GO" id="GO:0009523">
    <property type="term" value="C:photosystem II"/>
    <property type="evidence" value="ECO:0007669"/>
    <property type="project" value="UniProtKB-KW"/>
</dbReference>
<dbReference type="GO" id="GO:0042301">
    <property type="term" value="F:phosphate ion binding"/>
    <property type="evidence" value="ECO:0007669"/>
    <property type="project" value="InterPro"/>
</dbReference>
<dbReference type="GO" id="GO:0015979">
    <property type="term" value="P:photosynthesis"/>
    <property type="evidence" value="ECO:0007669"/>
    <property type="project" value="UniProtKB-UniRule"/>
</dbReference>
<dbReference type="GO" id="GO:0050821">
    <property type="term" value="P:protein stabilization"/>
    <property type="evidence" value="ECO:0007669"/>
    <property type="project" value="InterPro"/>
</dbReference>
<dbReference type="FunFam" id="1.20.5.880:FF:000001">
    <property type="entry name" value="Photosystem II reaction center protein H"/>
    <property type="match status" value="1"/>
</dbReference>
<dbReference type="Gene3D" id="1.20.5.880">
    <property type="entry name" value="Photosystem II reaction center protein H"/>
    <property type="match status" value="1"/>
</dbReference>
<dbReference type="HAMAP" id="MF_00752">
    <property type="entry name" value="PSII_PsbH"/>
    <property type="match status" value="1"/>
</dbReference>
<dbReference type="InterPro" id="IPR001056">
    <property type="entry name" value="PSII_PsbH"/>
</dbReference>
<dbReference type="InterPro" id="IPR036863">
    <property type="entry name" value="PSII_PsbH_sf"/>
</dbReference>
<dbReference type="NCBIfam" id="NF002728">
    <property type="entry name" value="PRK02624.1"/>
    <property type="match status" value="1"/>
</dbReference>
<dbReference type="PANTHER" id="PTHR34469">
    <property type="entry name" value="PHOTOSYSTEM II REACTION CENTER PROTEIN H"/>
    <property type="match status" value="1"/>
</dbReference>
<dbReference type="PANTHER" id="PTHR34469:SF4">
    <property type="entry name" value="PHOTOSYSTEM II REACTION CENTER PROTEIN H"/>
    <property type="match status" value="1"/>
</dbReference>
<dbReference type="Pfam" id="PF00737">
    <property type="entry name" value="PsbH"/>
    <property type="match status" value="1"/>
</dbReference>
<dbReference type="SUPFAM" id="SSF161025">
    <property type="entry name" value="Photosystem II 10 kDa phosphoprotein PsbH"/>
    <property type="match status" value="1"/>
</dbReference>
<proteinExistence type="evidence at protein level"/>
<geneLocation type="chloroplast"/>
<feature type="initiator methionine" description="Removed" evidence="3">
    <location>
        <position position="1"/>
    </location>
</feature>
<feature type="chain" id="PRO_0000070515" description="Photosystem II reaction center protein H">
    <location>
        <begin position="2"/>
        <end position="73"/>
    </location>
</feature>
<feature type="transmembrane region" description="Helical" evidence="1">
    <location>
        <begin position="41"/>
        <end position="61"/>
    </location>
</feature>
<feature type="region of interest" description="Disordered" evidence="2">
    <location>
        <begin position="1"/>
        <end position="23"/>
    </location>
</feature>
<feature type="modified residue" description="Phosphothreonine" evidence="1 3">
    <location>
        <position position="3"/>
    </location>
</feature>
<feature type="modified residue" description="Phosphothreonine" evidence="1 3">
    <location>
        <position position="5"/>
    </location>
</feature>
<gene>
    <name evidence="1" type="primary">psbH</name>
</gene>